<reference key="1">
    <citation type="submission" date="2004-01" db="EMBL/GenBank/DDBJ databases">
        <title>Gene and protein annotation of the Brucella melitensis 10kDa protein as an E. coli HdeA type II secretion homolog inducing CD8 T-cell subtype immune cells in Rev.1 vaccinated guinea pigs.</title>
        <authorList>
            <person name="Baum M."/>
            <person name="Hahn H."/>
            <person name="Splitter G.A."/>
            <person name="Mielke M."/>
            <person name="Bernstein M."/>
            <person name="Bardenstein S."/>
            <person name="Osman F."/>
            <person name="Ben-Asuli Y."/>
            <person name="Gaathon A."/>
            <person name="Molad T."/>
            <person name="Stram Y."/>
            <person name="Banai M."/>
        </authorList>
    </citation>
    <scope>NUCLEOTIDE SEQUENCE [GENOMIC DNA]</scope>
    <source>
        <strain>Rev.1</strain>
    </source>
</reference>
<reference key="2">
    <citation type="journal article" date="2002" name="Proc. Natl. Acad. Sci. U.S.A.">
        <title>The genome sequence of the facultative intracellular pathogen Brucella melitensis.</title>
        <authorList>
            <person name="DelVecchio V.G."/>
            <person name="Kapatral V."/>
            <person name="Redkar R.J."/>
            <person name="Patra G."/>
            <person name="Mujer C."/>
            <person name="Los T."/>
            <person name="Ivanova N."/>
            <person name="Anderson I."/>
            <person name="Bhattacharyya A."/>
            <person name="Lykidis A."/>
            <person name="Reznik G."/>
            <person name="Jablonski L."/>
            <person name="Larsen N."/>
            <person name="D'Souza M."/>
            <person name="Bernal A."/>
            <person name="Mazur M."/>
            <person name="Goltsman E."/>
            <person name="Selkov E."/>
            <person name="Elzer P.H."/>
            <person name="Hagius S."/>
            <person name="O'Callaghan D."/>
            <person name="Letesson J.-J."/>
            <person name="Haselkorn R."/>
            <person name="Kyrpides N.C."/>
            <person name="Overbeek R."/>
        </authorList>
    </citation>
    <scope>NUCLEOTIDE SEQUENCE [LARGE SCALE GENOMIC DNA]</scope>
    <source>
        <strain>ATCC 23456 / CCUG 17765 / NCTC 10094 / 16M</strain>
    </source>
</reference>
<keyword id="KW-0143">Chaperone</keyword>
<keyword id="KW-1015">Disulfide bond</keyword>
<keyword id="KW-0574">Periplasm</keyword>
<keyword id="KW-0732">Signal</keyword>
<name>HDEA_BRUME</name>
<feature type="signal peptide" evidence="1">
    <location>
        <begin position="1"/>
        <end position="26"/>
    </location>
</feature>
<feature type="chain" id="PRO_0000338634" description="Probable acid stress chaperone HdeA">
    <location>
        <begin position="27"/>
        <end position="114"/>
    </location>
</feature>
<feature type="disulfide bond" evidence="1">
    <location>
        <begin position="46"/>
        <end position="94"/>
    </location>
</feature>
<dbReference type="EMBL" id="AY518304">
    <property type="protein sequence ID" value="AAR98497.1"/>
    <property type="molecule type" value="Genomic_DNA"/>
</dbReference>
<dbReference type="EMBL" id="AE008918">
    <property type="protein sequence ID" value="AAL54148.1"/>
    <property type="molecule type" value="Genomic_DNA"/>
</dbReference>
<dbReference type="PIR" id="AI3622">
    <property type="entry name" value="AI3622"/>
</dbReference>
<dbReference type="RefSeq" id="WP_002966248.1">
    <property type="nucleotide sequence ID" value="NZ_GG703779.1"/>
</dbReference>
<dbReference type="SMR" id="Q8YBJ4"/>
<dbReference type="GeneID" id="93015292"/>
<dbReference type="KEGG" id="bme:BMEII0906"/>
<dbReference type="KEGG" id="bmel:DK63_2344"/>
<dbReference type="PATRIC" id="fig|224914.52.peg.2455"/>
<dbReference type="eggNOG" id="ENOG5032Y4G">
    <property type="taxonomic scope" value="Bacteria"/>
</dbReference>
<dbReference type="PhylomeDB" id="Q8YBJ4"/>
<dbReference type="Proteomes" id="UP000000419">
    <property type="component" value="Chromosome II"/>
</dbReference>
<dbReference type="GO" id="GO:0030288">
    <property type="term" value="C:outer membrane-bounded periplasmic space"/>
    <property type="evidence" value="ECO:0007669"/>
    <property type="project" value="InterPro"/>
</dbReference>
<dbReference type="GO" id="GO:1990451">
    <property type="term" value="P:cellular stress response to acidic pH"/>
    <property type="evidence" value="ECO:0007669"/>
    <property type="project" value="UniProtKB-UniRule"/>
</dbReference>
<dbReference type="Gene3D" id="1.10.890.10">
    <property type="entry name" value="HNS-dependent expression A"/>
    <property type="match status" value="1"/>
</dbReference>
<dbReference type="HAMAP" id="MF_00946">
    <property type="entry name" value="HdeA"/>
    <property type="match status" value="1"/>
</dbReference>
<dbReference type="InterPro" id="IPR024972">
    <property type="entry name" value="HdeA"/>
</dbReference>
<dbReference type="InterPro" id="IPR038303">
    <property type="entry name" value="HdeA/HdeB_sf"/>
</dbReference>
<dbReference type="InterPro" id="IPR036831">
    <property type="entry name" value="HdeA_sf"/>
</dbReference>
<dbReference type="InterPro" id="IPR010486">
    <property type="entry name" value="HNS-dep_expression_A/B"/>
</dbReference>
<dbReference type="NCBIfam" id="NF007576">
    <property type="entry name" value="PRK10208.1"/>
    <property type="match status" value="1"/>
</dbReference>
<dbReference type="Pfam" id="PF06411">
    <property type="entry name" value="HdeA"/>
    <property type="match status" value="1"/>
</dbReference>
<dbReference type="PIRSF" id="PIRSF009564">
    <property type="entry name" value="HNS-dep_expression_A"/>
    <property type="match status" value="1"/>
</dbReference>
<dbReference type="SUPFAM" id="SSF47752">
    <property type="entry name" value="Protein HNS-dependent expression A, HdeA"/>
    <property type="match status" value="1"/>
</dbReference>
<accession>Q8YBJ4</accession>
<accession>Q6R2J7</accession>
<evidence type="ECO:0000255" key="1">
    <source>
        <dbReference type="HAMAP-Rule" id="MF_00946"/>
    </source>
</evidence>
<organism>
    <name type="scientific">Brucella melitensis biotype 1 (strain ATCC 23456 / CCUG 17765 / NCTC 10094 / 16M)</name>
    <dbReference type="NCBI Taxonomy" id="224914"/>
    <lineage>
        <taxon>Bacteria</taxon>
        <taxon>Pseudomonadati</taxon>
        <taxon>Pseudomonadota</taxon>
        <taxon>Alphaproteobacteria</taxon>
        <taxon>Hyphomicrobiales</taxon>
        <taxon>Brucellaceae</taxon>
        <taxon>Brucella/Ochrobactrum group</taxon>
        <taxon>Brucella</taxon>
    </lineage>
</organism>
<sequence>MIKALFNKNTALAAVAILALSGGAMAESAKTHKTDMAKKKVSELTCEDFNGLEESFKPTVVGWVVGFNKKGKEEDAVIDVDGIETVTPAIIEACKQEPKASFWKKAEAELKKVF</sequence>
<proteinExistence type="inferred from homology"/>
<gene>
    <name evidence="1" type="primary">hdeA</name>
    <name type="ordered locus">BMEII0906</name>
</gene>
<protein>
    <recommendedName>
        <fullName evidence="1">Probable acid stress chaperone HdeA</fullName>
    </recommendedName>
</protein>
<comment type="function">
    <text evidence="1">Required for optimal acid stress protection. Exhibits a chaperone-like activity only at low pH by suppressing non-specifically the aggregation of denaturated periplasmic proteins.</text>
</comment>
<comment type="subcellular location">
    <subcellularLocation>
        <location evidence="1">Periplasm</location>
    </subcellularLocation>
</comment>
<comment type="similarity">
    <text evidence="1">Belongs to the HdeA family.</text>
</comment>